<sequence length="778" mass="87688">MPAFLGLKCLGKLCSSEKSKVTSSERTSARGSNRKRLIVEDRRVSGTSFTAHRRATITHLLYLCPKDYCPRGRVCNSVDPFVAHPQDPHHPSEKPVIHCHKCGEPCKGEVLRVQTKHFHIKCFTCKVCGCDLAQGGFFIKNGEYLCTLDYQRMYGTRCHGCGEFVEGEVVTALGKTYHPNCFACTICKRPFPPGDRVTFNGRDCLCQLCAQPMSSSPKETTFSSNCAGCGRDIKNGQALLALDKQWHLGCFKCKSCGKVLTGEYISKDGAPYCEKDYQGLFGVKCEACHQFITGKVLEAGDKHYHPSCARCSRCNQMFTEGEEMYLQGSTVWHPDCKQSTKTEEKLRPTRTSSESIYSRPGSSIPGSPGHTIYAKVDNEILDYKDLAAIPKVKAIYDIERPDLITYEPFYTSGYDDKQERQSLGESPRTLSPTPSAEGYQDVRDRMIHRSTSQGSINSPVYSRHSYTPTTSRSPQHFHRPGNEPSSGRNSPLPYRPDSRPLTPTYAQAPKHFHVPDQGINIYRKPPIYKQHAALAAQSKSSEDIIKFSKFPAAQAPDPSETPKIETDHWPGPPSFAVVGPDMKRRSSGREEDDEELLRRRQLQEEQLMKLNSGLGQLILKEEMEKESRERSSLLASRYDSPINSASHIPSSKTASLPGYGRNGLHRPVSTDFAQYNSYGDVSGGVRDYQTLPDGHMPAMRMDRGVSMPNMLEPKIFPYEMLMVTNRGRNKILREVDRTRLERHLAPEVFREIFGMSIQEFDRLPLWRRNDMKKKAKLF</sequence>
<evidence type="ECO:0000250" key="1"/>
<evidence type="ECO:0000250" key="2">
    <source>
        <dbReference type="UniProtKB" id="Q8K4G5"/>
    </source>
</evidence>
<evidence type="ECO:0000255" key="3"/>
<evidence type="ECO:0000255" key="4">
    <source>
        <dbReference type="PROSITE-ProRule" id="PRU00125"/>
    </source>
</evidence>
<evidence type="ECO:0000255" key="5">
    <source>
        <dbReference type="PROSITE-ProRule" id="PRU00595"/>
    </source>
</evidence>
<evidence type="ECO:0000256" key="6">
    <source>
        <dbReference type="SAM" id="MobiDB-lite"/>
    </source>
</evidence>
<evidence type="ECO:0000269" key="7">
    <source>
    </source>
</evidence>
<evidence type="ECO:0000269" key="8">
    <source>
    </source>
</evidence>
<evidence type="ECO:0000303" key="9">
    <source>
    </source>
</evidence>
<evidence type="ECO:0000303" key="10">
    <source>
    </source>
</evidence>
<evidence type="ECO:0000303" key="11">
    <source>
    </source>
</evidence>
<evidence type="ECO:0000303" key="12">
    <source>
    </source>
</evidence>
<evidence type="ECO:0000305" key="13"/>
<evidence type="ECO:0007744" key="14">
    <source>
    </source>
</evidence>
<evidence type="ECO:0007744" key="15">
    <source>
    </source>
</evidence>
<evidence type="ECO:0007744" key="16">
    <source>
    </source>
</evidence>
<evidence type="ECO:0007744" key="17">
    <source>
    </source>
</evidence>
<evidence type="ECO:0007744" key="18">
    <source>
    </source>
</evidence>
<evidence type="ECO:0007744" key="19">
    <source>
    </source>
</evidence>
<evidence type="ECO:0007744" key="20">
    <source>
    </source>
</evidence>
<evidence type="ECO:0007744" key="21">
    <source>
    </source>
</evidence>
<evidence type="ECO:0007744" key="22">
    <source>
    </source>
</evidence>
<feature type="chain" id="PRO_0000075697" description="Actin-binding LIM protein 1">
    <location>
        <begin position="1"/>
        <end position="778"/>
    </location>
</feature>
<feature type="domain" description="LIM zinc-binding 1" evidence="4">
    <location>
        <begin position="97"/>
        <end position="156"/>
    </location>
</feature>
<feature type="domain" description="LIM zinc-binding 2" evidence="4">
    <location>
        <begin position="156"/>
        <end position="216"/>
    </location>
</feature>
<feature type="domain" description="LIM zinc-binding 3" evidence="4">
    <location>
        <begin position="224"/>
        <end position="283"/>
    </location>
</feature>
<feature type="domain" description="LIM zinc-binding 4" evidence="4">
    <location>
        <begin position="283"/>
        <end position="343"/>
    </location>
</feature>
<feature type="domain" description="HP" evidence="5">
    <location>
        <begin position="710"/>
        <end position="778"/>
    </location>
</feature>
<feature type="region of interest" description="Disordered" evidence="6">
    <location>
        <begin position="339"/>
        <end position="370"/>
    </location>
</feature>
<feature type="region of interest" description="Disordered" evidence="6">
    <location>
        <begin position="414"/>
        <end position="510"/>
    </location>
</feature>
<feature type="region of interest" description="Disordered" evidence="6">
    <location>
        <begin position="552"/>
        <end position="597"/>
    </location>
</feature>
<feature type="coiled-coil region" evidence="3">
    <location>
        <begin position="590"/>
        <end position="614"/>
    </location>
</feature>
<feature type="compositionally biased region" description="Low complexity" evidence="6">
    <location>
        <begin position="360"/>
        <end position="369"/>
    </location>
</feature>
<feature type="compositionally biased region" description="Polar residues" evidence="6">
    <location>
        <begin position="423"/>
        <end position="434"/>
    </location>
</feature>
<feature type="compositionally biased region" description="Polar residues" evidence="6">
    <location>
        <begin position="449"/>
        <end position="474"/>
    </location>
</feature>
<feature type="modified residue" description="Phosphoserine" evidence="2">
    <location>
        <position position="216"/>
    </location>
</feature>
<feature type="modified residue" description="Phosphoserine" evidence="17">
    <location>
        <position position="367"/>
    </location>
</feature>
<feature type="modified residue" description="Phosphotyrosine" evidence="17">
    <location>
        <position position="373"/>
    </location>
</feature>
<feature type="modified residue" description="Phosphotyrosine" evidence="15">
    <location>
        <position position="396"/>
    </location>
</feature>
<feature type="modified residue" description="Phosphoserine" evidence="20">
    <location>
        <position position="422"/>
    </location>
</feature>
<feature type="modified residue" description="Phosphoserine" evidence="17 21">
    <location>
        <position position="426"/>
    </location>
</feature>
<feature type="modified residue" description="Phosphoserine" evidence="16 17 20">
    <location>
        <position position="431"/>
    </location>
</feature>
<feature type="modified residue" description="Phosphothreonine" evidence="17">
    <location>
        <position position="433"/>
    </location>
</feature>
<feature type="modified residue" description="Phosphoserine" evidence="16 17 18 19 20 21">
    <location>
        <position position="435"/>
    </location>
</feature>
<feature type="modified residue" description="Phosphotyrosine" evidence="14">
    <location>
        <position position="439"/>
    </location>
</feature>
<feature type="modified residue" description="Phosphoserine" evidence="20">
    <location>
        <position position="452"/>
    </location>
</feature>
<feature type="modified residue" description="Phosphoserine" evidence="16 20 21">
    <location>
        <position position="455"/>
    </location>
</feature>
<feature type="modified residue" description="Phosphoserine" evidence="16 20">
    <location>
        <position position="458"/>
    </location>
</feature>
<feature type="modified residue" description="Phosphoserine" evidence="2">
    <location>
        <position position="498"/>
    </location>
</feature>
<feature type="modified residue" description="Phosphoserine" evidence="16 20">
    <location>
        <position position="587"/>
    </location>
</feature>
<feature type="modified residue" description="Phosphoserine" evidence="16 18">
    <location>
        <position position="640"/>
    </location>
</feature>
<feature type="modified residue" description="Phosphoserine" evidence="16 20">
    <location>
        <position position="655"/>
    </location>
</feature>
<feature type="modified residue" description="Phosphoserine" evidence="2">
    <location>
        <position position="677"/>
    </location>
</feature>
<feature type="modified residue" description="Phosphoserine" evidence="21">
    <location>
        <position position="706"/>
    </location>
</feature>
<feature type="cross-link" description="Glycyl lysine isopeptide (Lys-Gly) (interchain with G-Cter in SUMO2)" evidence="22">
    <location>
        <position position="620"/>
    </location>
</feature>
<feature type="splice variant" id="VSP_012099" description="In isoform 3, isoform 4 and isoform 5." evidence="9 10 11">
    <location>
        <begin position="1"/>
        <end position="316"/>
    </location>
</feature>
<feature type="splice variant" id="VSP_012100" description="In isoform 2 and isoform 6." evidence="9 12">
    <original>MPAFLGLKCLGKLCSSEKSKVTSSERTSARGSNRKRLIVEDRRVSGTSFTAHRRATITHLLYLCPKDYCPRGRVCNSVDPF</original>
    <variation>MLMTLEMTELTDPHHTMGDYK</variation>
    <location>
        <begin position="1"/>
        <end position="81"/>
    </location>
</feature>
<feature type="splice variant" id="VSP_041185" description="In isoform 5 and isoform 6." evidence="9">
    <original>R</original>
    <variation>RLPNIRRSSSDFFYSKSLIRRTGRSPSLQ</variation>
    <location>
        <position position="347"/>
    </location>
</feature>
<feature type="splice variant" id="VSP_012101" description="In isoform 4." evidence="10">
    <location>
        <begin position="348"/>
        <end position="373"/>
    </location>
</feature>
<feature type="splice variant" id="VSP_012102" description="In isoform 3, isoform 4 and isoform 5." evidence="9 10 11">
    <location>
        <begin position="480"/>
        <end position="514"/>
    </location>
</feature>
<feature type="splice variant" id="VSP_057209" description="In isoform 6." evidence="9">
    <original>H</original>
    <variation>HDA</variation>
    <location>
        <position position="531"/>
    </location>
</feature>
<feature type="sequence variant" id="VAR_050141" description="In dbSNP:rs11593544.">
    <original>P</original>
    <variation>T</variation>
    <location>
        <position position="434"/>
    </location>
</feature>
<feature type="sequence variant" id="VAR_050142" description="In dbSNP:rs7091419.">
    <original>R</original>
    <variation>G</variation>
    <location>
        <position position="637"/>
    </location>
</feature>
<feature type="sequence conflict" description="In Ref. 1; AAC51676." evidence="13" ref="1">
    <original>R</original>
    <variation>L</variation>
    <location>
        <position position="499"/>
    </location>
</feature>
<feature type="sequence conflict" description="In Ref. 1; AAC51676." evidence="13" ref="1">
    <original>A</original>
    <variation>R</variation>
    <location>
        <position position="532"/>
    </location>
</feature>
<feature type="sequence conflict" description="In Ref. 2; BAA06681." evidence="13" ref="2">
    <original>K</original>
    <variation>E</variation>
    <location>
        <position position="563"/>
    </location>
</feature>
<feature type="sequence conflict" description="In Ref. 2; BAA06681." evidence="13" ref="2">
    <original>V</original>
    <variation>I</variation>
    <location>
        <position position="578"/>
    </location>
</feature>
<reference key="1">
    <citation type="journal article" date="1997" name="J. Cell Biol.">
        <title>Molecular characterization of abLIM, a novel actin-binding and double zinc finger protein.</title>
        <authorList>
            <person name="Roof D.J."/>
            <person name="Hayes A."/>
            <person name="Adamian M."/>
            <person name="Chishti A.H."/>
            <person name="Li T."/>
        </authorList>
    </citation>
    <scope>NUCLEOTIDE SEQUENCE [MRNA] (ISOFORM 1)</scope>
    <scope>FUNCTION</scope>
    <scope>ALTERNATIVE SPLICING</scope>
    <scope>TISSUE SPECIFICITY</scope>
    <source>
        <tissue>Retina</tissue>
    </source>
</reference>
<reference key="2">
    <citation type="journal article" date="1994" name="DNA Res.">
        <title>Prediction of the coding sequences of unidentified human genes. II. The coding sequences of 40 new genes (KIAA0041-KIAA0080) deduced by analysis of cDNA clones from human cell line KG-1.</title>
        <authorList>
            <person name="Nomura N."/>
            <person name="Nagase T."/>
            <person name="Miyajima N."/>
            <person name="Sazuka T."/>
            <person name="Tanaka A."/>
            <person name="Sato S."/>
            <person name="Seki N."/>
            <person name="Kawarabayasi Y."/>
            <person name="Ishikawa K."/>
            <person name="Tabata S."/>
        </authorList>
    </citation>
    <scope>NUCLEOTIDE SEQUENCE [LARGE SCALE MRNA] (ISOFORM 2)</scope>
    <source>
        <tissue>Bone marrow</tissue>
    </source>
</reference>
<reference key="3">
    <citation type="journal article" date="2002" name="DNA Res.">
        <title>Construction of expression-ready cDNA clones for KIAA genes: manual curation of 330 KIAA cDNA clones.</title>
        <authorList>
            <person name="Nakajima D."/>
            <person name="Okazaki N."/>
            <person name="Yamakawa H."/>
            <person name="Kikuno R."/>
            <person name="Ohara O."/>
            <person name="Nagase T."/>
        </authorList>
    </citation>
    <scope>SEQUENCE REVISION</scope>
</reference>
<reference key="4">
    <citation type="journal article" date="2004" name="Nat. Genet.">
        <title>Complete sequencing and characterization of 21,243 full-length human cDNAs.</title>
        <authorList>
            <person name="Ota T."/>
            <person name="Suzuki Y."/>
            <person name="Nishikawa T."/>
            <person name="Otsuki T."/>
            <person name="Sugiyama T."/>
            <person name="Irie R."/>
            <person name="Wakamatsu A."/>
            <person name="Hayashi K."/>
            <person name="Sato H."/>
            <person name="Nagai K."/>
            <person name="Kimura K."/>
            <person name="Makita H."/>
            <person name="Sekine M."/>
            <person name="Obayashi M."/>
            <person name="Nishi T."/>
            <person name="Shibahara T."/>
            <person name="Tanaka T."/>
            <person name="Ishii S."/>
            <person name="Yamamoto J."/>
            <person name="Saito K."/>
            <person name="Kawai Y."/>
            <person name="Isono Y."/>
            <person name="Nakamura Y."/>
            <person name="Nagahari K."/>
            <person name="Murakami K."/>
            <person name="Yasuda T."/>
            <person name="Iwayanagi T."/>
            <person name="Wagatsuma M."/>
            <person name="Shiratori A."/>
            <person name="Sudo H."/>
            <person name="Hosoiri T."/>
            <person name="Kaku Y."/>
            <person name="Kodaira H."/>
            <person name="Kondo H."/>
            <person name="Sugawara M."/>
            <person name="Takahashi M."/>
            <person name="Kanda K."/>
            <person name="Yokoi T."/>
            <person name="Furuya T."/>
            <person name="Kikkawa E."/>
            <person name="Omura Y."/>
            <person name="Abe K."/>
            <person name="Kamihara K."/>
            <person name="Katsuta N."/>
            <person name="Sato K."/>
            <person name="Tanikawa M."/>
            <person name="Yamazaki M."/>
            <person name="Ninomiya K."/>
            <person name="Ishibashi T."/>
            <person name="Yamashita H."/>
            <person name="Murakawa K."/>
            <person name="Fujimori K."/>
            <person name="Tanai H."/>
            <person name="Kimata M."/>
            <person name="Watanabe M."/>
            <person name="Hiraoka S."/>
            <person name="Chiba Y."/>
            <person name="Ishida S."/>
            <person name="Ono Y."/>
            <person name="Takiguchi S."/>
            <person name="Watanabe S."/>
            <person name="Yosida M."/>
            <person name="Hotuta T."/>
            <person name="Kusano J."/>
            <person name="Kanehori K."/>
            <person name="Takahashi-Fujii A."/>
            <person name="Hara H."/>
            <person name="Tanase T.-O."/>
            <person name="Nomura Y."/>
            <person name="Togiya S."/>
            <person name="Komai F."/>
            <person name="Hara R."/>
            <person name="Takeuchi K."/>
            <person name="Arita M."/>
            <person name="Imose N."/>
            <person name="Musashino K."/>
            <person name="Yuuki H."/>
            <person name="Oshima A."/>
            <person name="Sasaki N."/>
            <person name="Aotsuka S."/>
            <person name="Yoshikawa Y."/>
            <person name="Matsunawa H."/>
            <person name="Ichihara T."/>
            <person name="Shiohata N."/>
            <person name="Sano S."/>
            <person name="Moriya S."/>
            <person name="Momiyama H."/>
            <person name="Satoh N."/>
            <person name="Takami S."/>
            <person name="Terashima Y."/>
            <person name="Suzuki O."/>
            <person name="Nakagawa S."/>
            <person name="Senoh A."/>
            <person name="Mizoguchi H."/>
            <person name="Goto Y."/>
            <person name="Shimizu F."/>
            <person name="Wakebe H."/>
            <person name="Hishigaki H."/>
            <person name="Watanabe T."/>
            <person name="Sugiyama A."/>
            <person name="Takemoto M."/>
            <person name="Kawakami B."/>
            <person name="Yamazaki M."/>
            <person name="Watanabe K."/>
            <person name="Kumagai A."/>
            <person name="Itakura S."/>
            <person name="Fukuzumi Y."/>
            <person name="Fujimori Y."/>
            <person name="Komiyama M."/>
            <person name="Tashiro H."/>
            <person name="Tanigami A."/>
            <person name="Fujiwara T."/>
            <person name="Ono T."/>
            <person name="Yamada K."/>
            <person name="Fujii Y."/>
            <person name="Ozaki K."/>
            <person name="Hirao M."/>
            <person name="Ohmori Y."/>
            <person name="Kawabata A."/>
            <person name="Hikiji T."/>
            <person name="Kobatake N."/>
            <person name="Inagaki H."/>
            <person name="Ikema Y."/>
            <person name="Okamoto S."/>
            <person name="Okitani R."/>
            <person name="Kawakami T."/>
            <person name="Noguchi S."/>
            <person name="Itoh T."/>
            <person name="Shigeta K."/>
            <person name="Senba T."/>
            <person name="Matsumura K."/>
            <person name="Nakajima Y."/>
            <person name="Mizuno T."/>
            <person name="Morinaga M."/>
            <person name="Sasaki M."/>
            <person name="Togashi T."/>
            <person name="Oyama M."/>
            <person name="Hata H."/>
            <person name="Watanabe M."/>
            <person name="Komatsu T."/>
            <person name="Mizushima-Sugano J."/>
            <person name="Satoh T."/>
            <person name="Shirai Y."/>
            <person name="Takahashi Y."/>
            <person name="Nakagawa K."/>
            <person name="Okumura K."/>
            <person name="Nagase T."/>
            <person name="Nomura N."/>
            <person name="Kikuchi H."/>
            <person name="Masuho Y."/>
            <person name="Yamashita R."/>
            <person name="Nakai K."/>
            <person name="Yada T."/>
            <person name="Nakamura Y."/>
            <person name="Ohara O."/>
            <person name="Isogai T."/>
            <person name="Sugano S."/>
        </authorList>
    </citation>
    <scope>NUCLEOTIDE SEQUENCE [LARGE SCALE MRNA] (ISOFORMS 5 AND 6)</scope>
    <source>
        <tissue>Pericardium</tissue>
        <tissue>Uterus</tissue>
    </source>
</reference>
<reference key="5">
    <citation type="journal article" date="2007" name="BMC Genomics">
        <title>The full-ORF clone resource of the German cDNA consortium.</title>
        <authorList>
            <person name="Bechtel S."/>
            <person name="Rosenfelder H."/>
            <person name="Duda A."/>
            <person name="Schmidt C.P."/>
            <person name="Ernst U."/>
            <person name="Wellenreuther R."/>
            <person name="Mehrle A."/>
            <person name="Schuster C."/>
            <person name="Bahr A."/>
            <person name="Bloecker H."/>
            <person name="Heubner D."/>
            <person name="Hoerlein A."/>
            <person name="Michel G."/>
            <person name="Wedler H."/>
            <person name="Koehrer K."/>
            <person name="Ottenwaelder B."/>
            <person name="Poustka A."/>
            <person name="Wiemann S."/>
            <person name="Schupp I."/>
        </authorList>
    </citation>
    <scope>NUCLEOTIDE SEQUENCE [LARGE SCALE MRNA] (ISOFORM 3)</scope>
    <source>
        <tissue>Retina</tissue>
    </source>
</reference>
<reference key="6">
    <citation type="journal article" date="2004" name="Nature">
        <title>The DNA sequence and comparative analysis of human chromosome 10.</title>
        <authorList>
            <person name="Deloukas P."/>
            <person name="Earthrowl M.E."/>
            <person name="Grafham D.V."/>
            <person name="Rubenfield M."/>
            <person name="French L."/>
            <person name="Steward C.A."/>
            <person name="Sims S.K."/>
            <person name="Jones M.C."/>
            <person name="Searle S."/>
            <person name="Scott C."/>
            <person name="Howe K."/>
            <person name="Hunt S.E."/>
            <person name="Andrews T.D."/>
            <person name="Gilbert J.G.R."/>
            <person name="Swarbreck D."/>
            <person name="Ashurst J.L."/>
            <person name="Taylor A."/>
            <person name="Battles J."/>
            <person name="Bird C.P."/>
            <person name="Ainscough R."/>
            <person name="Almeida J.P."/>
            <person name="Ashwell R.I.S."/>
            <person name="Ambrose K.D."/>
            <person name="Babbage A.K."/>
            <person name="Bagguley C.L."/>
            <person name="Bailey J."/>
            <person name="Banerjee R."/>
            <person name="Bates K."/>
            <person name="Beasley H."/>
            <person name="Bray-Allen S."/>
            <person name="Brown A.J."/>
            <person name="Brown J.Y."/>
            <person name="Burford D.C."/>
            <person name="Burrill W."/>
            <person name="Burton J."/>
            <person name="Cahill P."/>
            <person name="Camire D."/>
            <person name="Carter N.P."/>
            <person name="Chapman J.C."/>
            <person name="Clark S.Y."/>
            <person name="Clarke G."/>
            <person name="Clee C.M."/>
            <person name="Clegg S."/>
            <person name="Corby N."/>
            <person name="Coulson A."/>
            <person name="Dhami P."/>
            <person name="Dutta I."/>
            <person name="Dunn M."/>
            <person name="Faulkner L."/>
            <person name="Frankish A."/>
            <person name="Frankland J.A."/>
            <person name="Garner P."/>
            <person name="Garnett J."/>
            <person name="Gribble S."/>
            <person name="Griffiths C."/>
            <person name="Grocock R."/>
            <person name="Gustafson E."/>
            <person name="Hammond S."/>
            <person name="Harley J.L."/>
            <person name="Hart E."/>
            <person name="Heath P.D."/>
            <person name="Ho T.P."/>
            <person name="Hopkins B."/>
            <person name="Horne J."/>
            <person name="Howden P.J."/>
            <person name="Huckle E."/>
            <person name="Hynds C."/>
            <person name="Johnson C."/>
            <person name="Johnson D."/>
            <person name="Kana A."/>
            <person name="Kay M."/>
            <person name="Kimberley A.M."/>
            <person name="Kershaw J.K."/>
            <person name="Kokkinaki M."/>
            <person name="Laird G.K."/>
            <person name="Lawlor S."/>
            <person name="Lee H.M."/>
            <person name="Leongamornlert D.A."/>
            <person name="Laird G."/>
            <person name="Lloyd C."/>
            <person name="Lloyd D.M."/>
            <person name="Loveland J."/>
            <person name="Lovell J."/>
            <person name="McLaren S."/>
            <person name="McLay K.E."/>
            <person name="McMurray A."/>
            <person name="Mashreghi-Mohammadi M."/>
            <person name="Matthews L."/>
            <person name="Milne S."/>
            <person name="Nickerson T."/>
            <person name="Nguyen M."/>
            <person name="Overton-Larty E."/>
            <person name="Palmer S.A."/>
            <person name="Pearce A.V."/>
            <person name="Peck A.I."/>
            <person name="Pelan S."/>
            <person name="Phillimore B."/>
            <person name="Porter K."/>
            <person name="Rice C.M."/>
            <person name="Rogosin A."/>
            <person name="Ross M.T."/>
            <person name="Sarafidou T."/>
            <person name="Sehra H.K."/>
            <person name="Shownkeen R."/>
            <person name="Skuce C.D."/>
            <person name="Smith M."/>
            <person name="Standring L."/>
            <person name="Sycamore N."/>
            <person name="Tester J."/>
            <person name="Thorpe A."/>
            <person name="Torcasso W."/>
            <person name="Tracey A."/>
            <person name="Tromans A."/>
            <person name="Tsolas J."/>
            <person name="Wall M."/>
            <person name="Walsh J."/>
            <person name="Wang H."/>
            <person name="Weinstock K."/>
            <person name="West A.P."/>
            <person name="Willey D.L."/>
            <person name="Whitehead S.L."/>
            <person name="Wilming L."/>
            <person name="Wray P.W."/>
            <person name="Young L."/>
            <person name="Chen Y."/>
            <person name="Lovering R.C."/>
            <person name="Moschonas N.K."/>
            <person name="Siebert R."/>
            <person name="Fechtel K."/>
            <person name="Bentley D."/>
            <person name="Durbin R.M."/>
            <person name="Hubbard T."/>
            <person name="Doucette-Stamm L."/>
            <person name="Beck S."/>
            <person name="Smith D.R."/>
            <person name="Rogers J."/>
        </authorList>
    </citation>
    <scope>NUCLEOTIDE SEQUENCE [LARGE SCALE GENOMIC DNA]</scope>
</reference>
<reference key="7">
    <citation type="journal article" date="2004" name="Genome Res.">
        <title>The status, quality, and expansion of the NIH full-length cDNA project: the Mammalian Gene Collection (MGC).</title>
        <authorList>
            <consortium name="The MGC Project Team"/>
        </authorList>
    </citation>
    <scope>NUCLEOTIDE SEQUENCE [LARGE SCALE MRNA] (ISOFORM 4)</scope>
    <source>
        <tissue>Kidney</tissue>
    </source>
</reference>
<reference key="8">
    <citation type="journal article" date="2004" name="Anal. Chem.">
        <title>Robust phosphoproteomic profiling of tyrosine phosphorylation sites from human T cells using immobilized metal affinity chromatography and tandem mass spectrometry.</title>
        <authorList>
            <person name="Brill L.M."/>
            <person name="Salomon A.R."/>
            <person name="Ficarro S.B."/>
            <person name="Mukherji M."/>
            <person name="Stettler-Gill M."/>
            <person name="Peters E.C."/>
        </authorList>
    </citation>
    <scope>PHOSPHORYLATION [LARGE SCALE ANALYSIS] AT TYR-439</scope>
    <scope>IDENTIFICATION BY MASS SPECTROMETRY [LARGE SCALE ANALYSIS]</scope>
    <source>
        <tissue>Leukemic T-cell</tissue>
    </source>
</reference>
<reference key="9">
    <citation type="journal article" date="2005" name="Nat. Biotechnol.">
        <title>Immunoaffinity profiling of tyrosine phosphorylation in cancer cells.</title>
        <authorList>
            <person name="Rush J."/>
            <person name="Moritz A."/>
            <person name="Lee K.A."/>
            <person name="Guo A."/>
            <person name="Goss V.L."/>
            <person name="Spek E.J."/>
            <person name="Zhang H."/>
            <person name="Zha X.-M."/>
            <person name="Polakiewicz R.D."/>
            <person name="Comb M.J."/>
        </authorList>
    </citation>
    <scope>PHOSPHORYLATION [LARGE SCALE ANALYSIS] AT TYR-396</scope>
    <scope>IDENTIFICATION BY MASS SPECTROMETRY [LARGE SCALE ANALYSIS]</scope>
</reference>
<reference key="10">
    <citation type="journal article" date="2007" name="J. Biol. Chem.">
        <title>Two novel members of the ABLIM protein family, ABLIM-2 and -3, associate with STARS and directly bind F-actin.</title>
        <authorList>
            <person name="Barrientos T."/>
            <person name="Frank D."/>
            <person name="Kuwahara K."/>
            <person name="Bezprozvannaya S."/>
            <person name="Pipes G.C.T."/>
            <person name="Bassel-Duby R."/>
            <person name="Richardson J.A."/>
            <person name="Katus H.A."/>
            <person name="Olson E.N."/>
            <person name="Frey N."/>
        </authorList>
    </citation>
    <scope>INTERACTION WITH ABRA</scope>
</reference>
<reference key="11">
    <citation type="journal article" date="2007" name="Science">
        <title>ATM and ATR substrate analysis reveals extensive protein networks responsive to DNA damage.</title>
        <authorList>
            <person name="Matsuoka S."/>
            <person name="Ballif B.A."/>
            <person name="Smogorzewska A."/>
            <person name="McDonald E.R. III"/>
            <person name="Hurov K.E."/>
            <person name="Luo J."/>
            <person name="Bakalarski C.E."/>
            <person name="Zhao Z."/>
            <person name="Solimini N."/>
            <person name="Lerenthal Y."/>
            <person name="Shiloh Y."/>
            <person name="Gygi S.P."/>
            <person name="Elledge S.J."/>
        </authorList>
    </citation>
    <scope>IDENTIFICATION BY MASS SPECTROMETRY [LARGE SCALE ANALYSIS]</scope>
    <source>
        <tissue>Embryonic kidney</tissue>
    </source>
</reference>
<reference key="12">
    <citation type="journal article" date="2008" name="J. Proteome Res.">
        <title>Phosphoproteome of resting human platelets.</title>
        <authorList>
            <person name="Zahedi R.P."/>
            <person name="Lewandrowski U."/>
            <person name="Wiesner J."/>
            <person name="Wortelkamp S."/>
            <person name="Moebius J."/>
            <person name="Schuetz C."/>
            <person name="Walter U."/>
            <person name="Gambaryan S."/>
            <person name="Sickmann A."/>
        </authorList>
    </citation>
    <scope>IDENTIFICATION BY MASS SPECTROMETRY [LARGE SCALE ANALYSIS]</scope>
    <source>
        <tissue>Platelet</tissue>
    </source>
</reference>
<reference key="13">
    <citation type="journal article" date="2008" name="Proc. Natl. Acad. Sci. U.S.A.">
        <title>A quantitative atlas of mitotic phosphorylation.</title>
        <authorList>
            <person name="Dephoure N."/>
            <person name="Zhou C."/>
            <person name="Villen J."/>
            <person name="Beausoleil S.A."/>
            <person name="Bakalarski C.E."/>
            <person name="Elledge S.J."/>
            <person name="Gygi S.P."/>
        </authorList>
    </citation>
    <scope>PHOSPHORYLATION [LARGE SCALE ANALYSIS] AT SER-431; SER-435; SER-455; SER-458; SER-587; SER-640 AND SER-655</scope>
    <scope>IDENTIFICATION BY MASS SPECTROMETRY [LARGE SCALE ANALYSIS]</scope>
    <source>
        <tissue>Cervix carcinoma</tissue>
    </source>
</reference>
<reference key="14">
    <citation type="journal article" date="2009" name="Anal. Chem.">
        <title>Lys-N and trypsin cover complementary parts of the phosphoproteome in a refined SCX-based approach.</title>
        <authorList>
            <person name="Gauci S."/>
            <person name="Helbig A.O."/>
            <person name="Slijper M."/>
            <person name="Krijgsveld J."/>
            <person name="Heck A.J."/>
            <person name="Mohammed S."/>
        </authorList>
    </citation>
    <scope>IDENTIFICATION BY MASS SPECTROMETRY [LARGE SCALE ANALYSIS]</scope>
</reference>
<reference key="15">
    <citation type="journal article" date="2009" name="Sci. Signal.">
        <title>Quantitative phosphoproteomic analysis of T cell receptor signaling reveals system-wide modulation of protein-protein interactions.</title>
        <authorList>
            <person name="Mayya V."/>
            <person name="Lundgren D.H."/>
            <person name="Hwang S.-I."/>
            <person name="Rezaul K."/>
            <person name="Wu L."/>
            <person name="Eng J.K."/>
            <person name="Rodionov V."/>
            <person name="Han D.K."/>
        </authorList>
    </citation>
    <scope>PHOSPHORYLATION [LARGE SCALE ANALYSIS] AT SER-367; TYR-373; SER-426; SER-431; THR-433 AND SER-435</scope>
    <scope>IDENTIFICATION BY MASS SPECTROMETRY [LARGE SCALE ANALYSIS]</scope>
    <source>
        <tissue>Leukemic T-cell</tissue>
    </source>
</reference>
<reference key="16">
    <citation type="journal article" date="2010" name="Sci. Signal.">
        <title>Quantitative phosphoproteomics reveals widespread full phosphorylation site occupancy during mitosis.</title>
        <authorList>
            <person name="Olsen J.V."/>
            <person name="Vermeulen M."/>
            <person name="Santamaria A."/>
            <person name="Kumar C."/>
            <person name="Miller M.L."/>
            <person name="Jensen L.J."/>
            <person name="Gnad F."/>
            <person name="Cox J."/>
            <person name="Jensen T.S."/>
            <person name="Nigg E.A."/>
            <person name="Brunak S."/>
            <person name="Mann M."/>
        </authorList>
    </citation>
    <scope>PHOSPHORYLATION [LARGE SCALE ANALYSIS] AT SER-435 AND SER-640</scope>
    <scope>IDENTIFICATION BY MASS SPECTROMETRY [LARGE SCALE ANALYSIS]</scope>
    <source>
        <tissue>Cervix carcinoma</tissue>
    </source>
</reference>
<reference key="17">
    <citation type="journal article" date="2011" name="Sci. Signal.">
        <title>System-wide temporal characterization of the proteome and phosphoproteome of human embryonic stem cell differentiation.</title>
        <authorList>
            <person name="Rigbolt K.T."/>
            <person name="Prokhorova T.A."/>
            <person name="Akimov V."/>
            <person name="Henningsen J."/>
            <person name="Johansen P.T."/>
            <person name="Kratchmarova I."/>
            <person name="Kassem M."/>
            <person name="Mann M."/>
            <person name="Olsen J.V."/>
            <person name="Blagoev B."/>
        </authorList>
    </citation>
    <scope>PHOSPHORYLATION [LARGE SCALE ANALYSIS] AT SER-435</scope>
    <scope>IDENTIFICATION BY MASS SPECTROMETRY [LARGE SCALE ANALYSIS]</scope>
</reference>
<reference key="18">
    <citation type="journal article" date="2013" name="J. Proteome Res.">
        <title>Toward a comprehensive characterization of a human cancer cell phosphoproteome.</title>
        <authorList>
            <person name="Zhou H."/>
            <person name="Di Palma S."/>
            <person name="Preisinger C."/>
            <person name="Peng M."/>
            <person name="Polat A.N."/>
            <person name="Heck A.J."/>
            <person name="Mohammed S."/>
        </authorList>
    </citation>
    <scope>PHOSPHORYLATION [LARGE SCALE ANALYSIS] AT SER-422; SER-431; SER-435; SER-452; SER-455; SER-458; SER-587 AND SER-655</scope>
    <scope>IDENTIFICATION BY MASS SPECTROMETRY [LARGE SCALE ANALYSIS]</scope>
    <source>
        <tissue>Cervix carcinoma</tissue>
    </source>
</reference>
<reference key="19">
    <citation type="journal article" date="2014" name="J. Proteomics">
        <title>An enzyme assisted RP-RPLC approach for in-depth analysis of human liver phosphoproteome.</title>
        <authorList>
            <person name="Bian Y."/>
            <person name="Song C."/>
            <person name="Cheng K."/>
            <person name="Dong M."/>
            <person name="Wang F."/>
            <person name="Huang J."/>
            <person name="Sun D."/>
            <person name="Wang L."/>
            <person name="Ye M."/>
            <person name="Zou H."/>
        </authorList>
    </citation>
    <scope>PHOSPHORYLATION [LARGE SCALE ANALYSIS] AT SER-426; SER-435; SER-455 AND SER-706</scope>
    <scope>IDENTIFICATION BY MASS SPECTROMETRY [LARGE SCALE ANALYSIS]</scope>
    <source>
        <tissue>Liver</tissue>
    </source>
</reference>
<reference key="20">
    <citation type="journal article" date="2017" name="Nat. Struct. Mol. Biol.">
        <title>Site-specific mapping of the human SUMO proteome reveals co-modification with phosphorylation.</title>
        <authorList>
            <person name="Hendriks I.A."/>
            <person name="Lyon D."/>
            <person name="Young C."/>
            <person name="Jensen L.J."/>
            <person name="Vertegaal A.C."/>
            <person name="Nielsen M.L."/>
        </authorList>
    </citation>
    <scope>SUMOYLATION [LARGE SCALE ANALYSIS] AT LYS-620</scope>
    <scope>IDENTIFICATION BY MASS SPECTROMETRY [LARGE SCALE ANALYSIS]</scope>
</reference>
<gene>
    <name type="primary">ABLIM1</name>
    <name type="synonym">ABLIM</name>
    <name type="synonym">KIAA0059</name>
    <name type="synonym">LIMAB1</name>
</gene>
<accession>O14639</accession>
<accession>A6NI16</accession>
<accession>A6NJ06</accession>
<accession>A8MXA9</accession>
<accession>B3KVH2</accession>
<accession>Q15039</accession>
<accession>Q5JVV1</accession>
<accession>Q5JVV2</accession>
<accession>Q5T6N2</accession>
<accession>Q5T6N3</accession>
<accession>Q5T6N5</accession>
<accession>Q68CQ9</accession>
<accession>Q9BUP1</accession>
<proteinExistence type="evidence at protein level"/>
<keyword id="KW-0009">Actin-binding</keyword>
<keyword id="KW-0025">Alternative splicing</keyword>
<keyword id="KW-0175">Coiled coil</keyword>
<keyword id="KW-0963">Cytoplasm</keyword>
<keyword id="KW-0206">Cytoskeleton</keyword>
<keyword id="KW-1017">Isopeptide bond</keyword>
<keyword id="KW-0440">LIM domain</keyword>
<keyword id="KW-0479">Metal-binding</keyword>
<keyword id="KW-0597">Phosphoprotein</keyword>
<keyword id="KW-1267">Proteomics identification</keyword>
<keyword id="KW-1185">Reference proteome</keyword>
<keyword id="KW-0677">Repeat</keyword>
<keyword id="KW-0832">Ubl conjugation</keyword>
<keyword id="KW-0862">Zinc</keyword>
<dbReference type="EMBL" id="AF005654">
    <property type="protein sequence ID" value="AAC51676.1"/>
    <property type="molecule type" value="mRNA"/>
</dbReference>
<dbReference type="EMBL" id="D31883">
    <property type="protein sequence ID" value="BAA06681.2"/>
    <property type="status" value="ALT_INIT"/>
    <property type="molecule type" value="mRNA"/>
</dbReference>
<dbReference type="EMBL" id="AK098277">
    <property type="protein sequence ID" value="BAG53605.1"/>
    <property type="molecule type" value="mRNA"/>
</dbReference>
<dbReference type="EMBL" id="AK122891">
    <property type="protein sequence ID" value="BAG53784.1"/>
    <property type="molecule type" value="mRNA"/>
</dbReference>
<dbReference type="EMBL" id="CR749819">
    <property type="protein sequence ID" value="CAH18679.1"/>
    <property type="molecule type" value="mRNA"/>
</dbReference>
<dbReference type="EMBL" id="AL133384">
    <property type="status" value="NOT_ANNOTATED_CDS"/>
    <property type="molecule type" value="Genomic_DNA"/>
</dbReference>
<dbReference type="EMBL" id="AL354873">
    <property type="status" value="NOT_ANNOTATED_CDS"/>
    <property type="molecule type" value="Genomic_DNA"/>
</dbReference>
<dbReference type="EMBL" id="AL590109">
    <property type="status" value="NOT_ANNOTATED_CDS"/>
    <property type="molecule type" value="Genomic_DNA"/>
</dbReference>
<dbReference type="EMBL" id="BC002448">
    <property type="protein sequence ID" value="AAH02448.1"/>
    <property type="molecule type" value="mRNA"/>
</dbReference>
<dbReference type="CCDS" id="CCDS31288.1">
    <molecule id="O14639-2"/>
</dbReference>
<dbReference type="CCDS" id="CCDS31289.1">
    <molecule id="O14639-5"/>
</dbReference>
<dbReference type="CCDS" id="CCDS7590.1">
    <molecule id="O14639-1"/>
</dbReference>
<dbReference type="CCDS" id="CCDS81508.1">
    <molecule id="O14639-4"/>
</dbReference>
<dbReference type="CCDS" id="CCDS81509.1">
    <molecule id="O14639-6"/>
</dbReference>
<dbReference type="RefSeq" id="NP_001003407.1">
    <molecule id="O14639-2"/>
    <property type="nucleotide sequence ID" value="NM_001003407.2"/>
</dbReference>
<dbReference type="RefSeq" id="NP_001309811.1">
    <molecule id="O14639-6"/>
    <property type="nucleotide sequence ID" value="NM_001322882.2"/>
</dbReference>
<dbReference type="RefSeq" id="NP_001309821.1">
    <molecule id="O14639-3"/>
    <property type="nucleotide sequence ID" value="NM_001322892.2"/>
</dbReference>
<dbReference type="RefSeq" id="NP_001309822.1">
    <molecule id="O14639-3"/>
    <property type="nucleotide sequence ID" value="NM_001322893.2"/>
</dbReference>
<dbReference type="RefSeq" id="NP_001309825.1">
    <molecule id="O14639-4"/>
    <property type="nucleotide sequence ID" value="NM_001322896.2"/>
</dbReference>
<dbReference type="RefSeq" id="NP_002304.3">
    <molecule id="O14639-1"/>
    <property type="nucleotide sequence ID" value="NM_002313.5"/>
</dbReference>
<dbReference type="RefSeq" id="NP_006711.3">
    <molecule id="O14639-5"/>
    <property type="nucleotide sequence ID" value="NM_006720.3"/>
</dbReference>
<dbReference type="SMR" id="O14639"/>
<dbReference type="BioGRID" id="110171">
    <property type="interactions" value="202"/>
</dbReference>
<dbReference type="FunCoup" id="O14639">
    <property type="interactions" value="1038"/>
</dbReference>
<dbReference type="IntAct" id="O14639">
    <property type="interactions" value="109"/>
</dbReference>
<dbReference type="MINT" id="O14639"/>
<dbReference type="STRING" id="9606.ENSP00000277895"/>
<dbReference type="GlyConnect" id="2904">
    <property type="glycosylation" value="1 O-GlcNAc glycan (1 site)"/>
</dbReference>
<dbReference type="GlyCosmos" id="O14639">
    <property type="glycosylation" value="15 sites, 2 glycans"/>
</dbReference>
<dbReference type="GlyGen" id="O14639">
    <property type="glycosylation" value="19 sites, 2 O-linked glycans (18 sites)"/>
</dbReference>
<dbReference type="iPTMnet" id="O14639"/>
<dbReference type="PhosphoSitePlus" id="O14639"/>
<dbReference type="BioMuta" id="ABLIM1"/>
<dbReference type="CPTAC" id="CPTAC-957"/>
<dbReference type="jPOST" id="O14639"/>
<dbReference type="MassIVE" id="O14639"/>
<dbReference type="PaxDb" id="9606-ENSP00000277895"/>
<dbReference type="PeptideAtlas" id="O14639"/>
<dbReference type="ProteomicsDB" id="48133">
    <molecule id="O14639-1"/>
</dbReference>
<dbReference type="ProteomicsDB" id="48134">
    <molecule id="O14639-2"/>
</dbReference>
<dbReference type="ProteomicsDB" id="48135">
    <molecule id="O14639-3"/>
</dbReference>
<dbReference type="ProteomicsDB" id="48136">
    <molecule id="O14639-4"/>
</dbReference>
<dbReference type="ProteomicsDB" id="48137">
    <molecule id="O14639-5"/>
</dbReference>
<dbReference type="ProteomicsDB" id="64602"/>
<dbReference type="Pumba" id="O14639"/>
<dbReference type="Antibodypedia" id="31944">
    <property type="antibodies" value="188 antibodies from 28 providers"/>
</dbReference>
<dbReference type="DNASU" id="3983"/>
<dbReference type="Ensembl" id="ENST00000369253.6">
    <molecule id="O14639-4"/>
    <property type="protein sequence ID" value="ENSP00000358257.2"/>
    <property type="gene ID" value="ENSG00000099204.23"/>
</dbReference>
<dbReference type="Ensembl" id="ENST00000369256.6">
    <molecule id="O14639-6"/>
    <property type="protein sequence ID" value="ENSP00000358260.3"/>
    <property type="gene ID" value="ENSG00000099204.23"/>
</dbReference>
<dbReference type="Ensembl" id="ENST00000392952.7">
    <molecule id="O14639-5"/>
    <property type="protein sequence ID" value="ENSP00000376679.3"/>
    <property type="gene ID" value="ENSG00000099204.23"/>
</dbReference>
<dbReference type="Ensembl" id="ENST00000392955.8">
    <molecule id="O14639-2"/>
    <property type="protein sequence ID" value="ENSP00000376682.4"/>
    <property type="gene ID" value="ENSG00000099204.23"/>
</dbReference>
<dbReference type="Ensembl" id="ENST00000533213.7">
    <molecule id="O14639-1"/>
    <property type="protein sequence ID" value="ENSP00000433629.3"/>
    <property type="gene ID" value="ENSG00000099204.23"/>
</dbReference>
<dbReference type="GeneID" id="3983"/>
<dbReference type="KEGG" id="hsa:3983"/>
<dbReference type="MANE-Select" id="ENST00000533213.7">
    <property type="protein sequence ID" value="ENSP00000433629.3"/>
    <property type="RefSeq nucleotide sequence ID" value="NM_002313.7"/>
    <property type="RefSeq protein sequence ID" value="NP_002304.3"/>
</dbReference>
<dbReference type="UCSC" id="uc057wcr.1">
    <molecule id="O14639-1"/>
    <property type="organism name" value="human"/>
</dbReference>
<dbReference type="AGR" id="HGNC:78"/>
<dbReference type="CTD" id="3983"/>
<dbReference type="DisGeNET" id="3983"/>
<dbReference type="GeneCards" id="ABLIM1"/>
<dbReference type="HGNC" id="HGNC:78">
    <property type="gene designation" value="ABLIM1"/>
</dbReference>
<dbReference type="HPA" id="ENSG00000099204">
    <property type="expression patterns" value="Low tissue specificity"/>
</dbReference>
<dbReference type="MIM" id="602330">
    <property type="type" value="gene"/>
</dbReference>
<dbReference type="neXtProt" id="NX_O14639"/>
<dbReference type="OpenTargets" id="ENSG00000099204"/>
<dbReference type="PharmGKB" id="PA35023"/>
<dbReference type="VEuPathDB" id="HostDB:ENSG00000099204"/>
<dbReference type="eggNOG" id="KOG1044">
    <property type="taxonomic scope" value="Eukaryota"/>
</dbReference>
<dbReference type="GeneTree" id="ENSGT00950000182850"/>
<dbReference type="HOGENOM" id="CLU_001357_12_2_1"/>
<dbReference type="InParanoid" id="O14639"/>
<dbReference type="OMA" id="NMLEPKA"/>
<dbReference type="OrthoDB" id="1746725at2759"/>
<dbReference type="PAN-GO" id="O14639">
    <property type="GO annotations" value="5 GO annotations based on evolutionary models"/>
</dbReference>
<dbReference type="PhylomeDB" id="O14639"/>
<dbReference type="TreeFam" id="TF318042"/>
<dbReference type="PathwayCommons" id="O14639"/>
<dbReference type="Reactome" id="R-HSA-418885">
    <property type="pathway name" value="DCC mediated attractive signaling"/>
</dbReference>
<dbReference type="SignaLink" id="O14639"/>
<dbReference type="BioGRID-ORCS" id="3983">
    <property type="hits" value="12 hits in 1147 CRISPR screens"/>
</dbReference>
<dbReference type="CD-CODE" id="F345034F">
    <property type="entry name" value="Signaling cluster"/>
</dbReference>
<dbReference type="CD-CODE" id="FB4E32DD">
    <property type="entry name" value="Presynaptic clusters and postsynaptic densities"/>
</dbReference>
<dbReference type="ChiTaRS" id="ABLIM1">
    <property type="organism name" value="human"/>
</dbReference>
<dbReference type="GeneWiki" id="ABLIM1"/>
<dbReference type="GenomeRNAi" id="3983"/>
<dbReference type="Pharos" id="O14639">
    <property type="development level" value="Tbio"/>
</dbReference>
<dbReference type="PRO" id="PR:O14639"/>
<dbReference type="Proteomes" id="UP000005640">
    <property type="component" value="Chromosome 10"/>
</dbReference>
<dbReference type="RNAct" id="O14639">
    <property type="molecule type" value="protein"/>
</dbReference>
<dbReference type="Bgee" id="ENSG00000099204">
    <property type="expression patterns" value="Expressed in left ventricle myocardium and 215 other cell types or tissues"/>
</dbReference>
<dbReference type="ExpressionAtlas" id="O14639">
    <property type="expression patterns" value="baseline and differential"/>
</dbReference>
<dbReference type="GO" id="GO:0015629">
    <property type="term" value="C:actin cytoskeleton"/>
    <property type="evidence" value="ECO:0000318"/>
    <property type="project" value="GO_Central"/>
</dbReference>
<dbReference type="GO" id="GO:0005737">
    <property type="term" value="C:cytoplasm"/>
    <property type="evidence" value="ECO:0007669"/>
    <property type="project" value="UniProtKB-SubCell"/>
</dbReference>
<dbReference type="GO" id="GO:0030027">
    <property type="term" value="C:lamellipodium"/>
    <property type="evidence" value="ECO:0000314"/>
    <property type="project" value="MGI"/>
</dbReference>
<dbReference type="GO" id="GO:0014069">
    <property type="term" value="C:postsynaptic density"/>
    <property type="evidence" value="ECO:0007669"/>
    <property type="project" value="Ensembl"/>
</dbReference>
<dbReference type="GO" id="GO:0001725">
    <property type="term" value="C:stress fiber"/>
    <property type="evidence" value="ECO:0000314"/>
    <property type="project" value="MGI"/>
</dbReference>
<dbReference type="GO" id="GO:0003779">
    <property type="term" value="F:actin binding"/>
    <property type="evidence" value="ECO:0000304"/>
    <property type="project" value="ProtInc"/>
</dbReference>
<dbReference type="GO" id="GO:0051015">
    <property type="term" value="F:actin filament binding"/>
    <property type="evidence" value="ECO:0000318"/>
    <property type="project" value="GO_Central"/>
</dbReference>
<dbReference type="GO" id="GO:0046872">
    <property type="term" value="F:metal ion binding"/>
    <property type="evidence" value="ECO:0007669"/>
    <property type="project" value="UniProtKB-KW"/>
</dbReference>
<dbReference type="GO" id="GO:0009887">
    <property type="term" value="P:animal organ morphogenesis"/>
    <property type="evidence" value="ECO:0000304"/>
    <property type="project" value="ProtInc"/>
</dbReference>
<dbReference type="GO" id="GO:0007411">
    <property type="term" value="P:axon guidance"/>
    <property type="evidence" value="ECO:0007669"/>
    <property type="project" value="Ensembl"/>
</dbReference>
<dbReference type="GO" id="GO:0060271">
    <property type="term" value="P:cilium assembly"/>
    <property type="evidence" value="ECO:0000315"/>
    <property type="project" value="MGI"/>
</dbReference>
<dbReference type="GO" id="GO:0007010">
    <property type="term" value="P:cytoskeleton organization"/>
    <property type="evidence" value="ECO:0007669"/>
    <property type="project" value="InterPro"/>
</dbReference>
<dbReference type="GO" id="GO:0030032">
    <property type="term" value="P:lamellipodium assembly"/>
    <property type="evidence" value="ECO:0000315"/>
    <property type="project" value="MGI"/>
</dbReference>
<dbReference type="GO" id="GO:0045944">
    <property type="term" value="P:positive regulation of transcription by RNA polymerase II"/>
    <property type="evidence" value="ECO:0007669"/>
    <property type="project" value="Ensembl"/>
</dbReference>
<dbReference type="GO" id="GO:0006366">
    <property type="term" value="P:transcription by RNA polymerase II"/>
    <property type="evidence" value="ECO:0007669"/>
    <property type="project" value="Ensembl"/>
</dbReference>
<dbReference type="GO" id="GO:0007601">
    <property type="term" value="P:visual perception"/>
    <property type="evidence" value="ECO:0000304"/>
    <property type="project" value="ProtInc"/>
</dbReference>
<dbReference type="CDD" id="cd09327">
    <property type="entry name" value="LIM1_abLIM"/>
    <property type="match status" value="1"/>
</dbReference>
<dbReference type="CDD" id="cd09328">
    <property type="entry name" value="LIM2_abLIM"/>
    <property type="match status" value="1"/>
</dbReference>
<dbReference type="CDD" id="cd09329">
    <property type="entry name" value="LIM3_abLIM"/>
    <property type="match status" value="1"/>
</dbReference>
<dbReference type="CDD" id="cd09330">
    <property type="entry name" value="LIM4_abLIM"/>
    <property type="match status" value="1"/>
</dbReference>
<dbReference type="FunFam" id="2.10.110.10:FF:000003">
    <property type="entry name" value="actin-binding LIM protein 1 isoform X1"/>
    <property type="match status" value="1"/>
</dbReference>
<dbReference type="FunFam" id="2.10.110.10:FF:000004">
    <property type="entry name" value="actin-binding LIM protein 1 isoform X1"/>
    <property type="match status" value="1"/>
</dbReference>
<dbReference type="FunFam" id="2.10.110.10:FF:000007">
    <property type="entry name" value="actin-binding LIM protein 1 isoform X1"/>
    <property type="match status" value="1"/>
</dbReference>
<dbReference type="FunFam" id="2.10.110.10:FF:000024">
    <property type="entry name" value="actin-binding LIM protein 1 isoform X1"/>
    <property type="match status" value="1"/>
</dbReference>
<dbReference type="FunFam" id="1.10.950.10:FF:000001">
    <property type="entry name" value="actin-binding LIM protein 1 isoform X2"/>
    <property type="match status" value="1"/>
</dbReference>
<dbReference type="Gene3D" id="2.10.110.10">
    <property type="entry name" value="Cysteine Rich Protein"/>
    <property type="match status" value="4"/>
</dbReference>
<dbReference type="Gene3D" id="1.10.950.10">
    <property type="entry name" value="Villin headpiece domain"/>
    <property type="match status" value="1"/>
</dbReference>
<dbReference type="InterPro" id="IPR032402">
    <property type="entry name" value="AbLIM_anchor"/>
</dbReference>
<dbReference type="InterPro" id="IPR051618">
    <property type="entry name" value="Actin-binding_LIM"/>
</dbReference>
<dbReference type="InterPro" id="IPR003128">
    <property type="entry name" value="Villin_headpiece"/>
</dbReference>
<dbReference type="InterPro" id="IPR036886">
    <property type="entry name" value="Villin_headpiece_dom_sf"/>
</dbReference>
<dbReference type="InterPro" id="IPR001781">
    <property type="entry name" value="Znf_LIM"/>
</dbReference>
<dbReference type="PANTHER" id="PTHR24213">
    <property type="entry name" value="ACTIN-BINDING LIM PROTEIN"/>
    <property type="match status" value="1"/>
</dbReference>
<dbReference type="PANTHER" id="PTHR24213:SF18">
    <property type="entry name" value="ACTIN-BINDING LIM PROTEIN 1"/>
    <property type="match status" value="1"/>
</dbReference>
<dbReference type="Pfam" id="PF16182">
    <property type="entry name" value="AbLIM_anchor"/>
    <property type="match status" value="1"/>
</dbReference>
<dbReference type="Pfam" id="PF00412">
    <property type="entry name" value="LIM"/>
    <property type="match status" value="4"/>
</dbReference>
<dbReference type="Pfam" id="PF02209">
    <property type="entry name" value="VHP"/>
    <property type="match status" value="1"/>
</dbReference>
<dbReference type="SMART" id="SM00132">
    <property type="entry name" value="LIM"/>
    <property type="match status" value="4"/>
</dbReference>
<dbReference type="SMART" id="SM00153">
    <property type="entry name" value="VHP"/>
    <property type="match status" value="1"/>
</dbReference>
<dbReference type="SUPFAM" id="SSF57716">
    <property type="entry name" value="Glucocorticoid receptor-like (DNA-binding domain)"/>
    <property type="match status" value="6"/>
</dbReference>
<dbReference type="SUPFAM" id="SSF47050">
    <property type="entry name" value="VHP, Villin headpiece domain"/>
    <property type="match status" value="1"/>
</dbReference>
<dbReference type="PROSITE" id="PS51089">
    <property type="entry name" value="HP"/>
    <property type="match status" value="1"/>
</dbReference>
<dbReference type="PROSITE" id="PS00478">
    <property type="entry name" value="LIM_DOMAIN_1"/>
    <property type="match status" value="4"/>
</dbReference>
<dbReference type="PROSITE" id="PS50023">
    <property type="entry name" value="LIM_DOMAIN_2"/>
    <property type="match status" value="4"/>
</dbReference>
<comment type="function">
    <text evidence="1 8">May act as scaffold protein (By similarity). May play a role in the development of the retina. Has been suggested to play a role in axon guidance.</text>
</comment>
<comment type="subunit">
    <text evidence="7">Binds F-actin. Interacts with ABRA.</text>
</comment>
<comment type="interaction">
    <interactant intactId="EBI-487024">
        <id>O14639</id>
    </interactant>
    <interactant intactId="EBI-751319">
        <id>Q9H257</id>
        <label>CARD9</label>
    </interactant>
    <organismsDiffer>false</organismsDiffer>
    <experiments>3</experiments>
</comment>
<comment type="interaction">
    <interactant intactId="EBI-487024">
        <id>O14639</id>
    </interactant>
    <interactant intactId="EBI-740738">
        <id>O95751</id>
        <label>LDOC1</label>
    </interactant>
    <organismsDiffer>false</organismsDiffer>
    <experiments>2</experiments>
</comment>
<comment type="interaction">
    <interactant intactId="EBI-487024">
        <id>O14639</id>
    </interactant>
    <interactant intactId="EBI-476295">
        <id>P31947</id>
        <label>SFN</label>
    </interactant>
    <organismsDiffer>false</organismsDiffer>
    <experiments>5</experiments>
</comment>
<comment type="interaction">
    <interactant intactId="EBI-487024">
        <id>O14639</id>
    </interactant>
    <interactant intactId="EBI-356498">
        <id>P62258</id>
        <label>YWHAE</label>
    </interactant>
    <organismsDiffer>false</organismsDiffer>
    <experiments>7</experiments>
</comment>
<comment type="interaction">
    <interactant intactId="EBI-487024">
        <id>O14639</id>
    </interactant>
    <interactant intactId="EBI-347088">
        <id>P63104</id>
        <label>YWHAZ</label>
    </interactant>
    <organismsDiffer>false</organismsDiffer>
    <experiments>6</experiments>
</comment>
<comment type="interaction">
    <interactant intactId="EBI-11030084">
        <id>O14639-4</id>
    </interactant>
    <interactant intactId="EBI-10961624">
        <id>Q2TAC2-2</id>
        <label>CCDC57</label>
    </interactant>
    <organismsDiffer>false</organismsDiffer>
    <experiments>3</experiments>
</comment>
<comment type="interaction">
    <interactant intactId="EBI-11030084">
        <id>O14639-4</id>
    </interactant>
    <interactant intactId="EBI-701903">
        <id>Q14192</id>
        <label>FHL2</label>
    </interactant>
    <organismsDiffer>false</organismsDiffer>
    <experiments>3</experiments>
</comment>
<comment type="interaction">
    <interactant intactId="EBI-11030084">
        <id>O14639-4</id>
    </interactant>
    <interactant intactId="EBI-7116203">
        <id>O75031</id>
        <label>HSF2BP</label>
    </interactant>
    <organismsDiffer>false</organismsDiffer>
    <experiments>3</experiments>
</comment>
<comment type="subcellular location">
    <subcellularLocation>
        <location evidence="1">Cytoplasm</location>
    </subcellularLocation>
    <subcellularLocation>
        <location evidence="1">Cytoplasm</location>
        <location evidence="1">Cytoskeleton</location>
    </subcellularLocation>
    <text evidence="1">Associated with the cytoskeleton.</text>
</comment>
<comment type="alternative products">
    <event type="alternative splicing"/>
    <isoform>
        <id>O14639-1</id>
        <name>1</name>
        <sequence type="displayed"/>
    </isoform>
    <isoform>
        <id>O14639-2</id>
        <name>2</name>
        <sequence type="described" ref="VSP_012100"/>
    </isoform>
    <isoform>
        <id>O14639-3</id>
        <name>3</name>
        <sequence type="described" ref="VSP_012099 VSP_012102"/>
    </isoform>
    <isoform>
        <id>O14639-4</id>
        <name>4</name>
        <sequence type="described" ref="VSP_012099 VSP_012101 VSP_012102"/>
    </isoform>
    <isoform>
        <id>O14639-5</id>
        <name>5</name>
        <sequence type="described" ref="VSP_012099 VSP_041185 VSP_012102"/>
    </isoform>
    <isoform>
        <id>O14639-6</id>
        <name>6</name>
        <sequence type="described" ref="VSP_012100 VSP_041185 VSP_057209"/>
    </isoform>
</comment>
<comment type="tissue specificity">
    <text evidence="8">Detected in liver, heart, skeletal muscle, brain and retina, where it is concentrated in the inner segment and in the outer plexiform layers.</text>
</comment>
<comment type="sequence caution" evidence="13">
    <conflict type="erroneous initiation">
        <sequence resource="EMBL-CDS" id="BAA06681"/>
    </conflict>
    <text>Extended N-terminus.</text>
</comment>
<organism>
    <name type="scientific">Homo sapiens</name>
    <name type="common">Human</name>
    <dbReference type="NCBI Taxonomy" id="9606"/>
    <lineage>
        <taxon>Eukaryota</taxon>
        <taxon>Metazoa</taxon>
        <taxon>Chordata</taxon>
        <taxon>Craniata</taxon>
        <taxon>Vertebrata</taxon>
        <taxon>Euteleostomi</taxon>
        <taxon>Mammalia</taxon>
        <taxon>Eutheria</taxon>
        <taxon>Euarchontoglires</taxon>
        <taxon>Primates</taxon>
        <taxon>Haplorrhini</taxon>
        <taxon>Catarrhini</taxon>
        <taxon>Hominidae</taxon>
        <taxon>Homo</taxon>
    </lineage>
</organism>
<name>ABLM1_HUMAN</name>
<protein>
    <recommendedName>
        <fullName>Actin-binding LIM protein 1</fullName>
        <shortName>abLIM-1</shortName>
    </recommendedName>
    <alternativeName>
        <fullName>Actin-binding LIM protein family member 1</fullName>
    </alternativeName>
    <alternativeName>
        <fullName>Actin-binding double zinc finger protein</fullName>
    </alternativeName>
    <alternativeName>
        <fullName>LIMAB1</fullName>
    </alternativeName>
    <alternativeName>
        <fullName>Limatin</fullName>
    </alternativeName>
</protein>